<proteinExistence type="inferred from homology"/>
<protein>
    <recommendedName>
        <fullName evidence="1">Small ribosomal subunit protein uS11</fullName>
    </recommendedName>
    <alternativeName>
        <fullName evidence="2">30S ribosomal protein S11</fullName>
    </alternativeName>
</protein>
<dbReference type="EMBL" id="AP009180">
    <property type="protein sequence ID" value="BAF35168.1"/>
    <property type="molecule type" value="Genomic_DNA"/>
</dbReference>
<dbReference type="RefSeq" id="WP_011672360.1">
    <property type="nucleotide sequence ID" value="NC_008512.1"/>
</dbReference>
<dbReference type="SMR" id="Q05FK3"/>
<dbReference type="STRING" id="387662.CRP_137"/>
<dbReference type="KEGG" id="crp:CRP_137"/>
<dbReference type="HOGENOM" id="CLU_072439_5_0_6"/>
<dbReference type="OrthoDB" id="9806415at2"/>
<dbReference type="Proteomes" id="UP000000777">
    <property type="component" value="Chromosome"/>
</dbReference>
<dbReference type="GO" id="GO:1990904">
    <property type="term" value="C:ribonucleoprotein complex"/>
    <property type="evidence" value="ECO:0007669"/>
    <property type="project" value="UniProtKB-KW"/>
</dbReference>
<dbReference type="GO" id="GO:0005840">
    <property type="term" value="C:ribosome"/>
    <property type="evidence" value="ECO:0007669"/>
    <property type="project" value="UniProtKB-KW"/>
</dbReference>
<dbReference type="GO" id="GO:0019843">
    <property type="term" value="F:rRNA binding"/>
    <property type="evidence" value="ECO:0007669"/>
    <property type="project" value="UniProtKB-UniRule"/>
</dbReference>
<dbReference type="GO" id="GO:0003735">
    <property type="term" value="F:structural constituent of ribosome"/>
    <property type="evidence" value="ECO:0007669"/>
    <property type="project" value="InterPro"/>
</dbReference>
<dbReference type="GO" id="GO:0006412">
    <property type="term" value="P:translation"/>
    <property type="evidence" value="ECO:0007669"/>
    <property type="project" value="UniProtKB-UniRule"/>
</dbReference>
<dbReference type="Gene3D" id="3.30.420.80">
    <property type="entry name" value="Ribosomal protein S11"/>
    <property type="match status" value="1"/>
</dbReference>
<dbReference type="HAMAP" id="MF_01310">
    <property type="entry name" value="Ribosomal_uS11"/>
    <property type="match status" value="1"/>
</dbReference>
<dbReference type="InterPro" id="IPR001971">
    <property type="entry name" value="Ribosomal_uS11"/>
</dbReference>
<dbReference type="InterPro" id="IPR018102">
    <property type="entry name" value="Ribosomal_uS11_CS"/>
</dbReference>
<dbReference type="InterPro" id="IPR036967">
    <property type="entry name" value="Ribosomal_uS11_sf"/>
</dbReference>
<dbReference type="NCBIfam" id="NF003698">
    <property type="entry name" value="PRK05309.1"/>
    <property type="match status" value="1"/>
</dbReference>
<dbReference type="PANTHER" id="PTHR11759">
    <property type="entry name" value="40S RIBOSOMAL PROTEIN S14/30S RIBOSOMAL PROTEIN S11"/>
    <property type="match status" value="1"/>
</dbReference>
<dbReference type="Pfam" id="PF00411">
    <property type="entry name" value="Ribosomal_S11"/>
    <property type="match status" value="1"/>
</dbReference>
<dbReference type="PIRSF" id="PIRSF002131">
    <property type="entry name" value="Ribosomal_S11"/>
    <property type="match status" value="1"/>
</dbReference>
<dbReference type="SUPFAM" id="SSF53137">
    <property type="entry name" value="Translational machinery components"/>
    <property type="match status" value="1"/>
</dbReference>
<dbReference type="PROSITE" id="PS00054">
    <property type="entry name" value="RIBOSOMAL_S11"/>
    <property type="match status" value="1"/>
</dbReference>
<name>RS11_CARRP</name>
<keyword id="KW-0687">Ribonucleoprotein</keyword>
<keyword id="KW-0689">Ribosomal protein</keyword>
<keyword id="KW-0694">RNA-binding</keyword>
<keyword id="KW-0699">rRNA-binding</keyword>
<comment type="function">
    <text evidence="1">Located on the platform of the 30S subunit, it bridges several disparate RNA helices of the 16S rRNA. Forms part of the Shine-Dalgarno cleft in the 70S ribosome.</text>
</comment>
<comment type="subunit">
    <text evidence="1">Part of the 30S ribosomal subunit. Interacts with proteins S7 and S18. Binds to IF-3.</text>
</comment>
<comment type="similarity">
    <text evidence="1">Belongs to the universal ribosomal protein uS11 family.</text>
</comment>
<sequence>MKLYKKRGIIYIHSTFNNTISTLTDVFGNTIVWYSAGILGYKGPKKSTSLASQLISEKITISILKNNIKVVDIYIKGLGLGKETTLRIINNSGIFIRSITDITPIPHNGCRKKKKRRV</sequence>
<gene>
    <name evidence="1" type="primary">rpsK</name>
    <name type="ordered locus">CRP_137</name>
</gene>
<reference key="1">
    <citation type="journal article" date="2006" name="Science">
        <title>The 160-kilobase genome of the bacterial endosymbiont Carsonella.</title>
        <authorList>
            <person name="Nakabachi A."/>
            <person name="Yamashita A."/>
            <person name="Toh H."/>
            <person name="Ishikawa H."/>
            <person name="Dunbar H.E."/>
            <person name="Moran N.A."/>
            <person name="Hattori M."/>
        </authorList>
    </citation>
    <scope>NUCLEOTIDE SEQUENCE [LARGE SCALE GENOMIC DNA]</scope>
    <source>
        <strain>PV</strain>
    </source>
</reference>
<accession>Q05FK3</accession>
<organism>
    <name type="scientific">Carsonella ruddii (strain PV)</name>
    <dbReference type="NCBI Taxonomy" id="387662"/>
    <lineage>
        <taxon>Bacteria</taxon>
        <taxon>Pseudomonadati</taxon>
        <taxon>Pseudomonadota</taxon>
        <taxon>Gammaproteobacteria</taxon>
        <taxon>Oceanospirillales</taxon>
        <taxon>Halomonadaceae</taxon>
        <taxon>Zymobacter group</taxon>
        <taxon>Candidatus Carsonella</taxon>
    </lineage>
</organism>
<feature type="chain" id="PRO_0000294734" description="Small ribosomal subunit protein uS11">
    <location>
        <begin position="1"/>
        <end position="118"/>
    </location>
</feature>
<evidence type="ECO:0000255" key="1">
    <source>
        <dbReference type="HAMAP-Rule" id="MF_01310"/>
    </source>
</evidence>
<evidence type="ECO:0000305" key="2"/>